<proteinExistence type="evidence at transcript level"/>
<keyword id="KW-0007">Acetylation</keyword>
<keyword id="KW-0963">Cytoplasm</keyword>
<keyword id="KW-0472">Membrane</keyword>
<keyword id="KW-0509">mRNA transport</keyword>
<keyword id="KW-0906">Nuclear pore complex</keyword>
<keyword id="KW-0539">Nucleus</keyword>
<keyword id="KW-0653">Protein transport</keyword>
<keyword id="KW-1185">Reference proteome</keyword>
<keyword id="KW-0811">Translocation</keyword>
<keyword id="KW-0813">Transport</keyword>
<name>NTF2_BOVIN</name>
<feature type="chain" id="PRO_0000247805" description="Nuclear transport factor 2">
    <location>
        <begin position="1"/>
        <end position="127"/>
    </location>
</feature>
<feature type="domain" description="NTF2" evidence="3">
    <location>
        <begin position="10"/>
        <end position="121"/>
    </location>
</feature>
<feature type="modified residue" description="N6-acetyllysine" evidence="1">
    <location>
        <position position="4"/>
    </location>
</feature>
<comment type="function">
    <text evidence="1">Mediates the import of GDP-bound RAN from the cytoplasm into the nucleus which is essential for the function of RAN in cargo receptor-mediated nucleocytoplasmic transport. Thereby, plays indirectly a more general role in cargo receptor-mediated nucleocytoplasmic transport. Interacts with GDP-bound RAN in the cytosol, recruits it to the nuclear pore complex via its interaction with nucleoporins and promotes its nuclear import.</text>
</comment>
<comment type="subunit">
    <text evidence="1">Homodimer. Interacts with RAN (GDP-bound form); the interaction is direct and regulates RAN nuclear import. Interacts with the nucleoporins NUP54, NUP58 and NUP62 (via FG repeats); recruits NUTF2 to the nuclear pore complex a step required for NUTF2-mediated GDP-bound RAN nuclear import. Interacts with CAPG; mediates its nuclear import.</text>
</comment>
<comment type="subcellular location">
    <subcellularLocation>
        <location evidence="1">Cytoplasm</location>
        <location evidence="1">Cytosol</location>
    </subcellularLocation>
    <subcellularLocation>
        <location evidence="2">Nucleus outer membrane</location>
    </subcellularLocation>
    <subcellularLocation>
        <location evidence="2">Nucleus</location>
        <location evidence="2">Nuclear pore complex</location>
    </subcellularLocation>
    <subcellularLocation>
        <location evidence="2">Nucleus inner membrane</location>
    </subcellularLocation>
    <subcellularLocation>
        <location evidence="1">Nucleus</location>
        <location evidence="1">Nucleoplasm</location>
    </subcellularLocation>
    <text evidence="1">At steady state it is essentially nucleoplasmic, enriched in nucleoplasmic foci.</text>
</comment>
<sequence length="127" mass="14478">MGDKPIWEQIGSSFIQHYYQLFDNDRTQLGAIYIDASCLTWEGQQFQGKAAIVEKLSSLPFQKIQHSITAQDHQPTPDSCIISMVVGQLKADEDPIMGFHQMFLLKNINDAWVCTNDMFRLALHNFG</sequence>
<organism>
    <name type="scientific">Bos taurus</name>
    <name type="common">Bovine</name>
    <dbReference type="NCBI Taxonomy" id="9913"/>
    <lineage>
        <taxon>Eukaryota</taxon>
        <taxon>Metazoa</taxon>
        <taxon>Chordata</taxon>
        <taxon>Craniata</taxon>
        <taxon>Vertebrata</taxon>
        <taxon>Euteleostomi</taxon>
        <taxon>Mammalia</taxon>
        <taxon>Eutheria</taxon>
        <taxon>Laurasiatheria</taxon>
        <taxon>Artiodactyla</taxon>
        <taxon>Ruminantia</taxon>
        <taxon>Pecora</taxon>
        <taxon>Bovidae</taxon>
        <taxon>Bovinae</taxon>
        <taxon>Bos</taxon>
    </lineage>
</organism>
<evidence type="ECO:0000250" key="1">
    <source>
        <dbReference type="UniProtKB" id="P61970"/>
    </source>
</evidence>
<evidence type="ECO:0000250" key="2">
    <source>
        <dbReference type="UniProtKB" id="P61972"/>
    </source>
</evidence>
<evidence type="ECO:0000255" key="3">
    <source>
        <dbReference type="PROSITE-ProRule" id="PRU00137"/>
    </source>
</evidence>
<evidence type="ECO:0000305" key="4"/>
<gene>
    <name evidence="1" type="primary">NUTF2</name>
</gene>
<dbReference type="EMBL" id="BC109983">
    <property type="protein sequence ID" value="AAI09984.1"/>
    <property type="molecule type" value="mRNA"/>
</dbReference>
<dbReference type="RefSeq" id="NP_001032713.1">
    <property type="nucleotide sequence ID" value="NM_001037624.1"/>
</dbReference>
<dbReference type="RefSeq" id="XP_024834261.1">
    <property type="nucleotide sequence ID" value="XM_024978493.2"/>
</dbReference>
<dbReference type="BMRB" id="Q32KP9"/>
<dbReference type="SMR" id="Q32KP9"/>
<dbReference type="FunCoup" id="Q32KP9">
    <property type="interactions" value="4230"/>
</dbReference>
<dbReference type="STRING" id="9913.ENSBTAP00000008410"/>
<dbReference type="PaxDb" id="9913-ENSBTAP00000008410"/>
<dbReference type="PeptideAtlas" id="Q32KP9"/>
<dbReference type="GeneID" id="614921"/>
<dbReference type="KEGG" id="bta:614921"/>
<dbReference type="CTD" id="10204"/>
<dbReference type="VEuPathDB" id="HostDB:ENSBTAG00000006414"/>
<dbReference type="eggNOG" id="KOG2104">
    <property type="taxonomic scope" value="Eukaryota"/>
</dbReference>
<dbReference type="HOGENOM" id="CLU_131642_1_1_1"/>
<dbReference type="InParanoid" id="Q32KP9"/>
<dbReference type="OMA" id="QFVEYYY"/>
<dbReference type="OrthoDB" id="6507044at2759"/>
<dbReference type="TreeFam" id="TF314422"/>
<dbReference type="Proteomes" id="UP000009136">
    <property type="component" value="Chromosome 18"/>
</dbReference>
<dbReference type="Bgee" id="ENSBTAG00000006414">
    <property type="expression patterns" value="Expressed in oocyte and 103 other cell types or tissues"/>
</dbReference>
<dbReference type="GO" id="GO:0005829">
    <property type="term" value="C:cytosol"/>
    <property type="evidence" value="ECO:0000250"/>
    <property type="project" value="UniProtKB"/>
</dbReference>
<dbReference type="GO" id="GO:0005637">
    <property type="term" value="C:nuclear inner membrane"/>
    <property type="evidence" value="ECO:0007669"/>
    <property type="project" value="UniProtKB-SubCell"/>
</dbReference>
<dbReference type="GO" id="GO:0031965">
    <property type="term" value="C:nuclear membrane"/>
    <property type="evidence" value="ECO:0000250"/>
    <property type="project" value="UniProtKB"/>
</dbReference>
<dbReference type="GO" id="GO:0005640">
    <property type="term" value="C:nuclear outer membrane"/>
    <property type="evidence" value="ECO:0007669"/>
    <property type="project" value="UniProtKB-SubCell"/>
</dbReference>
<dbReference type="GO" id="GO:0044613">
    <property type="term" value="C:nuclear pore central transport channel"/>
    <property type="evidence" value="ECO:0000318"/>
    <property type="project" value="GO_Central"/>
</dbReference>
<dbReference type="GO" id="GO:0005654">
    <property type="term" value="C:nucleoplasm"/>
    <property type="evidence" value="ECO:0000250"/>
    <property type="project" value="UniProtKB"/>
</dbReference>
<dbReference type="GO" id="GO:0061608">
    <property type="term" value="F:nuclear import signal receptor activity"/>
    <property type="evidence" value="ECO:0000318"/>
    <property type="project" value="GO_Central"/>
</dbReference>
<dbReference type="GO" id="GO:0031267">
    <property type="term" value="F:small GTPase binding"/>
    <property type="evidence" value="ECO:0000250"/>
    <property type="project" value="UniProtKB"/>
</dbReference>
<dbReference type="GO" id="GO:0017056">
    <property type="term" value="F:structural constituent of nuclear pore"/>
    <property type="evidence" value="ECO:0000250"/>
    <property type="project" value="UniProtKB"/>
</dbReference>
<dbReference type="GO" id="GO:0051028">
    <property type="term" value="P:mRNA transport"/>
    <property type="evidence" value="ECO:0007669"/>
    <property type="project" value="UniProtKB-KW"/>
</dbReference>
<dbReference type="GO" id="GO:0006606">
    <property type="term" value="P:protein import into nucleus"/>
    <property type="evidence" value="ECO:0000250"/>
    <property type="project" value="UniProtKB"/>
</dbReference>
<dbReference type="GO" id="GO:0090204">
    <property type="term" value="P:protein localization to nuclear pore"/>
    <property type="evidence" value="ECO:0000250"/>
    <property type="project" value="UniProtKB"/>
</dbReference>
<dbReference type="CDD" id="cd00780">
    <property type="entry name" value="NTF2"/>
    <property type="match status" value="1"/>
</dbReference>
<dbReference type="FunFam" id="3.10.450.50:FF:000007">
    <property type="entry name" value="Nuclear transport factor 2"/>
    <property type="match status" value="1"/>
</dbReference>
<dbReference type="Gene3D" id="3.10.450.50">
    <property type="match status" value="1"/>
</dbReference>
<dbReference type="InterPro" id="IPR045875">
    <property type="entry name" value="NTF2"/>
</dbReference>
<dbReference type="InterPro" id="IPR032710">
    <property type="entry name" value="NTF2-like_dom_sf"/>
</dbReference>
<dbReference type="InterPro" id="IPR002075">
    <property type="entry name" value="NTF2_dom"/>
</dbReference>
<dbReference type="InterPro" id="IPR018222">
    <property type="entry name" value="Nuclear_transport_factor_2_euk"/>
</dbReference>
<dbReference type="PANTHER" id="PTHR12612">
    <property type="entry name" value="NUCLEAR TRANSPORT FACTOR 2"/>
    <property type="match status" value="1"/>
</dbReference>
<dbReference type="Pfam" id="PF02136">
    <property type="entry name" value="NTF2"/>
    <property type="match status" value="1"/>
</dbReference>
<dbReference type="SUPFAM" id="SSF54427">
    <property type="entry name" value="NTF2-like"/>
    <property type="match status" value="1"/>
</dbReference>
<dbReference type="PROSITE" id="PS50177">
    <property type="entry name" value="NTF2_DOMAIN"/>
    <property type="match status" value="1"/>
</dbReference>
<reference key="1">
    <citation type="submission" date="2005-11" db="EMBL/GenBank/DDBJ databases">
        <authorList>
            <consortium name="NIH - Mammalian Gene Collection (MGC) project"/>
        </authorList>
    </citation>
    <scope>NUCLEOTIDE SEQUENCE [LARGE SCALE MRNA]</scope>
    <source>
        <strain>Crossbred X Angus</strain>
        <tissue>Liver</tissue>
    </source>
</reference>
<accession>Q32KP9</accession>
<protein>
    <recommendedName>
        <fullName evidence="4">Nuclear transport factor 2</fullName>
        <shortName>NTF-2</shortName>
    </recommendedName>
</protein>